<sequence length="98" mass="10794">MVAIHKPAHDVILKPVVSEKSYAASDRGQYTFVVAPDANKVQIKQAIEEIFKVKVTNVNTLNRAGKKQRTRTGFGQRASQKRAIVTVAEGQTIDIFGN</sequence>
<keyword id="KW-1185">Reference proteome</keyword>
<keyword id="KW-0687">Ribonucleoprotein</keyword>
<keyword id="KW-0689">Ribosomal protein</keyword>
<keyword id="KW-0694">RNA-binding</keyword>
<keyword id="KW-0699">rRNA-binding</keyword>
<comment type="function">
    <text evidence="1">One of the early assembly proteins it binds 23S rRNA. One of the proteins that surrounds the polypeptide exit tunnel on the outside of the ribosome. Forms the main docking site for trigger factor binding to the ribosome.</text>
</comment>
<comment type="subunit">
    <text evidence="1">Part of the 50S ribosomal subunit. Contacts protein L29, and trigger factor when it is bound to the ribosome.</text>
</comment>
<comment type="similarity">
    <text evidence="1">Belongs to the universal ribosomal protein uL23 family.</text>
</comment>
<accession>Q8G415</accession>
<gene>
    <name evidence="1" type="primary">rplW</name>
    <name type="ordered locus">BL1580</name>
</gene>
<organism>
    <name type="scientific">Bifidobacterium longum (strain NCC 2705)</name>
    <dbReference type="NCBI Taxonomy" id="206672"/>
    <lineage>
        <taxon>Bacteria</taxon>
        <taxon>Bacillati</taxon>
        <taxon>Actinomycetota</taxon>
        <taxon>Actinomycetes</taxon>
        <taxon>Bifidobacteriales</taxon>
        <taxon>Bifidobacteriaceae</taxon>
        <taxon>Bifidobacterium</taxon>
    </lineage>
</organism>
<feature type="chain" id="PRO_1000144534" description="Large ribosomal subunit protein uL23">
    <location>
        <begin position="1"/>
        <end position="98"/>
    </location>
</feature>
<dbReference type="EMBL" id="AE014295">
    <property type="protein sequence ID" value="AAN25371.1"/>
    <property type="molecule type" value="Genomic_DNA"/>
</dbReference>
<dbReference type="RefSeq" id="NP_696735.1">
    <property type="nucleotide sequence ID" value="NC_004307.2"/>
</dbReference>
<dbReference type="RefSeq" id="WP_007053033.1">
    <property type="nucleotide sequence ID" value="NC_004307.2"/>
</dbReference>
<dbReference type="SMR" id="Q8G415"/>
<dbReference type="STRING" id="206672.BL1580"/>
<dbReference type="EnsemblBacteria" id="AAN25371">
    <property type="protein sequence ID" value="AAN25371"/>
    <property type="gene ID" value="BL1580"/>
</dbReference>
<dbReference type="GeneID" id="85165059"/>
<dbReference type="KEGG" id="blo:BL1580"/>
<dbReference type="PATRIC" id="fig|206672.9.peg.1637"/>
<dbReference type="HOGENOM" id="CLU_037562_3_2_11"/>
<dbReference type="OrthoDB" id="9793353at2"/>
<dbReference type="PhylomeDB" id="Q8G415"/>
<dbReference type="Proteomes" id="UP000000439">
    <property type="component" value="Chromosome"/>
</dbReference>
<dbReference type="GO" id="GO:1990904">
    <property type="term" value="C:ribonucleoprotein complex"/>
    <property type="evidence" value="ECO:0007669"/>
    <property type="project" value="UniProtKB-KW"/>
</dbReference>
<dbReference type="GO" id="GO:0005840">
    <property type="term" value="C:ribosome"/>
    <property type="evidence" value="ECO:0007669"/>
    <property type="project" value="UniProtKB-KW"/>
</dbReference>
<dbReference type="GO" id="GO:0019843">
    <property type="term" value="F:rRNA binding"/>
    <property type="evidence" value="ECO:0007669"/>
    <property type="project" value="UniProtKB-UniRule"/>
</dbReference>
<dbReference type="GO" id="GO:0003735">
    <property type="term" value="F:structural constituent of ribosome"/>
    <property type="evidence" value="ECO:0007669"/>
    <property type="project" value="InterPro"/>
</dbReference>
<dbReference type="GO" id="GO:0006412">
    <property type="term" value="P:translation"/>
    <property type="evidence" value="ECO:0007669"/>
    <property type="project" value="UniProtKB-UniRule"/>
</dbReference>
<dbReference type="FunFam" id="3.30.70.330:FF:000001">
    <property type="entry name" value="50S ribosomal protein L23"/>
    <property type="match status" value="1"/>
</dbReference>
<dbReference type="Gene3D" id="3.30.70.330">
    <property type="match status" value="1"/>
</dbReference>
<dbReference type="HAMAP" id="MF_01369_B">
    <property type="entry name" value="Ribosomal_uL23_B"/>
    <property type="match status" value="1"/>
</dbReference>
<dbReference type="InterPro" id="IPR012677">
    <property type="entry name" value="Nucleotide-bd_a/b_plait_sf"/>
</dbReference>
<dbReference type="InterPro" id="IPR013025">
    <property type="entry name" value="Ribosomal_uL23-like"/>
</dbReference>
<dbReference type="InterPro" id="IPR012678">
    <property type="entry name" value="Ribosomal_uL23/eL15/eS24_sf"/>
</dbReference>
<dbReference type="NCBIfam" id="NF004359">
    <property type="entry name" value="PRK05738.1-3"/>
    <property type="match status" value="1"/>
</dbReference>
<dbReference type="NCBIfam" id="NF004363">
    <property type="entry name" value="PRK05738.2-4"/>
    <property type="match status" value="1"/>
</dbReference>
<dbReference type="NCBIfam" id="NF004364">
    <property type="entry name" value="PRK05738.2-5"/>
    <property type="match status" value="1"/>
</dbReference>
<dbReference type="PANTHER" id="PTHR11620">
    <property type="entry name" value="60S RIBOSOMAL PROTEIN L23A"/>
    <property type="match status" value="1"/>
</dbReference>
<dbReference type="Pfam" id="PF00276">
    <property type="entry name" value="Ribosomal_L23"/>
    <property type="match status" value="1"/>
</dbReference>
<dbReference type="SUPFAM" id="SSF54189">
    <property type="entry name" value="Ribosomal proteins S24e, L23 and L15e"/>
    <property type="match status" value="1"/>
</dbReference>
<reference key="1">
    <citation type="journal article" date="2002" name="Proc. Natl. Acad. Sci. U.S.A.">
        <title>The genome sequence of Bifidobacterium longum reflects its adaptation to the human gastrointestinal tract.</title>
        <authorList>
            <person name="Schell M.A."/>
            <person name="Karmirantzou M."/>
            <person name="Snel B."/>
            <person name="Vilanova D."/>
            <person name="Berger B."/>
            <person name="Pessi G."/>
            <person name="Zwahlen M.-C."/>
            <person name="Desiere F."/>
            <person name="Bork P."/>
            <person name="Delley M."/>
            <person name="Pridmore R.D."/>
            <person name="Arigoni F."/>
        </authorList>
    </citation>
    <scope>NUCLEOTIDE SEQUENCE [LARGE SCALE GENOMIC DNA]</scope>
    <source>
        <strain>NCC 2705</strain>
    </source>
</reference>
<name>RL23_BIFLO</name>
<protein>
    <recommendedName>
        <fullName evidence="1">Large ribosomal subunit protein uL23</fullName>
    </recommendedName>
    <alternativeName>
        <fullName evidence="2">50S ribosomal protein L23</fullName>
    </alternativeName>
</protein>
<evidence type="ECO:0000255" key="1">
    <source>
        <dbReference type="HAMAP-Rule" id="MF_01369"/>
    </source>
</evidence>
<evidence type="ECO:0000305" key="2"/>
<proteinExistence type="inferred from homology"/>